<reference key="1">
    <citation type="journal article" date="2002" name="Proc. Natl. Acad. Sci. U.S.A.">
        <title>The complete genome of hyperthermophile Methanopyrus kandleri AV19 and monophyly of archaeal methanogens.</title>
        <authorList>
            <person name="Slesarev A.I."/>
            <person name="Mezhevaya K.V."/>
            <person name="Makarova K.S."/>
            <person name="Polushin N.N."/>
            <person name="Shcherbinina O.V."/>
            <person name="Shakhova V.V."/>
            <person name="Belova G.I."/>
            <person name="Aravind L."/>
            <person name="Natale D.A."/>
            <person name="Rogozin I.B."/>
            <person name="Tatusov R.L."/>
            <person name="Wolf Y.I."/>
            <person name="Stetter K.O."/>
            <person name="Malykh A.G."/>
            <person name="Koonin E.V."/>
            <person name="Kozyavkin S.A."/>
        </authorList>
    </citation>
    <scope>NUCLEOTIDE SEQUENCE [LARGE SCALE GENOMIC DNA]</scope>
    <source>
        <strain>AV19 / DSM 6324 / JCM 9639 / NBRC 100938</strain>
    </source>
</reference>
<dbReference type="EC" id="4.3.3.7" evidence="1"/>
<dbReference type="EMBL" id="AE009439">
    <property type="protein sequence ID" value="AAM02820.1"/>
    <property type="molecule type" value="Genomic_DNA"/>
</dbReference>
<dbReference type="RefSeq" id="WP_011019975.1">
    <property type="nucleotide sequence ID" value="NC_003551.1"/>
</dbReference>
<dbReference type="SMR" id="Q8TUZ4"/>
<dbReference type="FunCoup" id="Q8TUZ4">
    <property type="interactions" value="108"/>
</dbReference>
<dbReference type="STRING" id="190192.MK1607"/>
<dbReference type="PaxDb" id="190192-MK1607"/>
<dbReference type="EnsemblBacteria" id="AAM02820">
    <property type="protein sequence ID" value="AAM02820"/>
    <property type="gene ID" value="MK1607"/>
</dbReference>
<dbReference type="GeneID" id="1478202"/>
<dbReference type="KEGG" id="mka:MK1607"/>
<dbReference type="PATRIC" id="fig|190192.8.peg.1770"/>
<dbReference type="HOGENOM" id="CLU_049343_7_1_2"/>
<dbReference type="InParanoid" id="Q8TUZ4"/>
<dbReference type="OrthoDB" id="33636at2157"/>
<dbReference type="UniPathway" id="UPA00034">
    <property type="reaction ID" value="UER00017"/>
</dbReference>
<dbReference type="Proteomes" id="UP000001826">
    <property type="component" value="Chromosome"/>
</dbReference>
<dbReference type="GO" id="GO:0005737">
    <property type="term" value="C:cytoplasm"/>
    <property type="evidence" value="ECO:0007669"/>
    <property type="project" value="UniProtKB-SubCell"/>
</dbReference>
<dbReference type="GO" id="GO:0008675">
    <property type="term" value="F:2-dehydro-3-deoxy-phosphogluconate aldolase activity"/>
    <property type="evidence" value="ECO:0007669"/>
    <property type="project" value="UniProtKB-ARBA"/>
</dbReference>
<dbReference type="GO" id="GO:0008840">
    <property type="term" value="F:4-hydroxy-tetrahydrodipicolinate synthase activity"/>
    <property type="evidence" value="ECO:0007669"/>
    <property type="project" value="UniProtKB-UniRule"/>
</dbReference>
<dbReference type="GO" id="GO:0019877">
    <property type="term" value="P:diaminopimelate biosynthetic process"/>
    <property type="evidence" value="ECO:0007669"/>
    <property type="project" value="UniProtKB-UniRule"/>
</dbReference>
<dbReference type="GO" id="GO:0009089">
    <property type="term" value="P:lysine biosynthetic process via diaminopimelate"/>
    <property type="evidence" value="ECO:0007669"/>
    <property type="project" value="UniProtKB-UniRule"/>
</dbReference>
<dbReference type="CDD" id="cd00950">
    <property type="entry name" value="DHDPS"/>
    <property type="match status" value="1"/>
</dbReference>
<dbReference type="Gene3D" id="3.20.20.70">
    <property type="entry name" value="Aldolase class I"/>
    <property type="match status" value="1"/>
</dbReference>
<dbReference type="HAMAP" id="MF_00418">
    <property type="entry name" value="DapA"/>
    <property type="match status" value="1"/>
</dbReference>
<dbReference type="InterPro" id="IPR013785">
    <property type="entry name" value="Aldolase_TIM"/>
</dbReference>
<dbReference type="InterPro" id="IPR005263">
    <property type="entry name" value="DapA"/>
</dbReference>
<dbReference type="InterPro" id="IPR002220">
    <property type="entry name" value="DapA-like"/>
</dbReference>
<dbReference type="InterPro" id="IPR020625">
    <property type="entry name" value="Schiff_base-form_aldolases_AS"/>
</dbReference>
<dbReference type="InterPro" id="IPR020624">
    <property type="entry name" value="Schiff_base-form_aldolases_CS"/>
</dbReference>
<dbReference type="NCBIfam" id="TIGR00674">
    <property type="entry name" value="dapA"/>
    <property type="match status" value="1"/>
</dbReference>
<dbReference type="PANTHER" id="PTHR12128:SF66">
    <property type="entry name" value="4-HYDROXY-2-OXOGLUTARATE ALDOLASE, MITOCHONDRIAL"/>
    <property type="match status" value="1"/>
</dbReference>
<dbReference type="PANTHER" id="PTHR12128">
    <property type="entry name" value="DIHYDRODIPICOLINATE SYNTHASE"/>
    <property type="match status" value="1"/>
</dbReference>
<dbReference type="Pfam" id="PF00701">
    <property type="entry name" value="DHDPS"/>
    <property type="match status" value="1"/>
</dbReference>
<dbReference type="PIRSF" id="PIRSF001365">
    <property type="entry name" value="DHDPS"/>
    <property type="match status" value="1"/>
</dbReference>
<dbReference type="PRINTS" id="PR00146">
    <property type="entry name" value="DHPICSNTHASE"/>
</dbReference>
<dbReference type="SMART" id="SM01130">
    <property type="entry name" value="DHDPS"/>
    <property type="match status" value="1"/>
</dbReference>
<dbReference type="SUPFAM" id="SSF51569">
    <property type="entry name" value="Aldolase"/>
    <property type="match status" value="1"/>
</dbReference>
<dbReference type="PROSITE" id="PS00665">
    <property type="entry name" value="DHDPS_1"/>
    <property type="match status" value="1"/>
</dbReference>
<dbReference type="PROSITE" id="PS00666">
    <property type="entry name" value="DHDPS_2"/>
    <property type="match status" value="1"/>
</dbReference>
<feature type="chain" id="PRO_0000103198" description="4-hydroxy-tetrahydrodipicolinate synthase">
    <location>
        <begin position="1"/>
        <end position="300"/>
    </location>
</feature>
<feature type="active site" description="Proton donor/acceptor" evidence="1">
    <location>
        <position position="137"/>
    </location>
</feature>
<feature type="active site" description="Schiff-base intermediate with substrate" evidence="1">
    <location>
        <position position="166"/>
    </location>
</feature>
<feature type="binding site" evidence="1">
    <location>
        <position position="49"/>
    </location>
    <ligand>
        <name>pyruvate</name>
        <dbReference type="ChEBI" id="CHEBI:15361"/>
    </ligand>
</feature>
<feature type="binding site" evidence="1">
    <location>
        <position position="208"/>
    </location>
    <ligand>
        <name>pyruvate</name>
        <dbReference type="ChEBI" id="CHEBI:15361"/>
    </ligand>
</feature>
<feature type="site" description="Part of a proton relay during catalysis" evidence="1">
    <location>
        <position position="48"/>
    </location>
</feature>
<feature type="site" description="Part of a proton relay during catalysis" evidence="1">
    <location>
        <position position="111"/>
    </location>
</feature>
<protein>
    <recommendedName>
        <fullName evidence="1">4-hydroxy-tetrahydrodipicolinate synthase</fullName>
        <shortName evidence="1">HTPA synthase</shortName>
        <ecNumber evidence="1">4.3.3.7</ecNumber>
    </recommendedName>
</protein>
<evidence type="ECO:0000255" key="1">
    <source>
        <dbReference type="HAMAP-Rule" id="MF_00418"/>
    </source>
</evidence>
<evidence type="ECO:0000305" key="2"/>
<organism>
    <name type="scientific">Methanopyrus kandleri (strain AV19 / DSM 6324 / JCM 9639 / NBRC 100938)</name>
    <dbReference type="NCBI Taxonomy" id="190192"/>
    <lineage>
        <taxon>Archaea</taxon>
        <taxon>Methanobacteriati</taxon>
        <taxon>Methanobacteriota</taxon>
        <taxon>Methanomada group</taxon>
        <taxon>Methanopyri</taxon>
        <taxon>Methanopyrales</taxon>
        <taxon>Methanopyraceae</taxon>
        <taxon>Methanopyrus</taxon>
    </lineage>
</organism>
<accession>Q8TUZ4</accession>
<name>DAPA_METKA</name>
<gene>
    <name evidence="1" type="primary">dapA</name>
    <name type="ordered locus">MK1607</name>
</gene>
<proteinExistence type="inferred from homology"/>
<comment type="function">
    <text evidence="1">Catalyzes the condensation of (S)-aspartate-beta-semialdehyde [(S)-ASA] and pyruvate to 4-hydroxy-tetrahydrodipicolinate (HTPA).</text>
</comment>
<comment type="catalytic activity">
    <reaction evidence="1">
        <text>L-aspartate 4-semialdehyde + pyruvate = (2S,4S)-4-hydroxy-2,3,4,5-tetrahydrodipicolinate + H2O + H(+)</text>
        <dbReference type="Rhea" id="RHEA:34171"/>
        <dbReference type="ChEBI" id="CHEBI:15361"/>
        <dbReference type="ChEBI" id="CHEBI:15377"/>
        <dbReference type="ChEBI" id="CHEBI:15378"/>
        <dbReference type="ChEBI" id="CHEBI:67139"/>
        <dbReference type="ChEBI" id="CHEBI:537519"/>
        <dbReference type="EC" id="4.3.3.7"/>
    </reaction>
</comment>
<comment type="pathway">
    <text evidence="1">Amino-acid biosynthesis; L-lysine biosynthesis via DAP pathway; (S)-tetrahydrodipicolinate from L-aspartate: step 3/4.</text>
</comment>
<comment type="subunit">
    <text evidence="1">Homotetramer; dimer of dimers.</text>
</comment>
<comment type="subcellular location">
    <subcellularLocation>
        <location evidence="1">Cytoplasm</location>
    </subcellularLocation>
</comment>
<comment type="similarity">
    <text evidence="1">Belongs to the DapA family.</text>
</comment>
<comment type="caution">
    <text evidence="2">Was originally thought to be a dihydrodipicolinate synthase (DHDPS), catalyzing the condensation of (S)-aspartate-beta-semialdehyde [(S)-ASA] and pyruvate to dihydrodipicolinate (DHDP). However, it was shown in E.coli that the product of the enzymatic reaction is not dihydrodipicolinate but in fact (4S)-4-hydroxy-2,3,4,5-tetrahydro-(2S)-dipicolinic acid (HTPA), and that the consecutive dehydration reaction leading to DHDP is not spontaneous but catalyzed by DapB.</text>
</comment>
<sequence length="300" mass="32345">MGFQIEGVIPALITPFTDDLKGINEEGLRENVSRLLEAGVHGVVPAGTTGESSTLSHAEHRRVIEIVVDEVNGKVPVIAGAGSNSTREALELSTYAEDVGADAILSVVPYYNKPPQEGLFIHFSKIAEAVECPIILYNVPSRTGCALEPETAAKLAEEYSHIVGVKEASGDLDVVQRFIEETPDDFILLSGVDELTLPILAVGGVGVISVTANVAPELMVEMYEAWKSGDVERARELHYELLPLHRALFTETNPIPVKAAVELVGMASSPPRPPLKEAREDTKELLRRELKKLGLLPEGG</sequence>
<keyword id="KW-0028">Amino-acid biosynthesis</keyword>
<keyword id="KW-0963">Cytoplasm</keyword>
<keyword id="KW-0220">Diaminopimelate biosynthesis</keyword>
<keyword id="KW-0456">Lyase</keyword>
<keyword id="KW-0457">Lysine biosynthesis</keyword>
<keyword id="KW-1185">Reference proteome</keyword>
<keyword id="KW-0704">Schiff base</keyword>